<comment type="similarity">
    <text evidence="1">To C.jejuni CJ1463.</text>
</comment>
<dbReference type="EMBL" id="AE000511">
    <property type="protein sequence ID" value="AAD07321.1"/>
    <property type="molecule type" value="Genomic_DNA"/>
</dbReference>
<dbReference type="PIR" id="E64550">
    <property type="entry name" value="E64550"/>
</dbReference>
<dbReference type="RefSeq" id="NP_207043.1">
    <property type="nucleotide sequence ID" value="NC_000915.1"/>
</dbReference>
<dbReference type="RefSeq" id="WP_000609401.1">
    <property type="nucleotide sequence ID" value="NC_018939.1"/>
</dbReference>
<dbReference type="SMR" id="P64657"/>
<dbReference type="IntAct" id="P64657">
    <property type="interactions" value="1"/>
</dbReference>
<dbReference type="STRING" id="85962.HP_0245"/>
<dbReference type="PaxDb" id="85962-C694_01240"/>
<dbReference type="EnsemblBacteria" id="AAD07321">
    <property type="protein sequence ID" value="AAD07321"/>
    <property type="gene ID" value="HP_0245"/>
</dbReference>
<dbReference type="KEGG" id="heo:C694_01240"/>
<dbReference type="KEGG" id="hpy:HP_0245"/>
<dbReference type="PATRIC" id="fig|85962.47.peg.265"/>
<dbReference type="eggNOG" id="COG3951">
    <property type="taxonomic scope" value="Bacteria"/>
</dbReference>
<dbReference type="InParanoid" id="P64657"/>
<dbReference type="OrthoDB" id="5324665at2"/>
<dbReference type="Proteomes" id="UP000000429">
    <property type="component" value="Chromosome"/>
</dbReference>
<dbReference type="InterPro" id="IPR016511">
    <property type="entry name" value="UCP007248"/>
</dbReference>
<dbReference type="PIRSF" id="PIRSF007248">
    <property type="entry name" value="UCP007248"/>
    <property type="match status" value="1"/>
</dbReference>
<organism>
    <name type="scientific">Helicobacter pylori (strain ATCC 700392 / 26695)</name>
    <name type="common">Campylobacter pylori</name>
    <dbReference type="NCBI Taxonomy" id="85962"/>
    <lineage>
        <taxon>Bacteria</taxon>
        <taxon>Pseudomonadati</taxon>
        <taxon>Campylobacterota</taxon>
        <taxon>Epsilonproteobacteria</taxon>
        <taxon>Campylobacterales</taxon>
        <taxon>Helicobacteraceae</taxon>
        <taxon>Helicobacter</taxon>
    </lineage>
</organism>
<reference key="1">
    <citation type="journal article" date="1997" name="Nature">
        <title>The complete genome sequence of the gastric pathogen Helicobacter pylori.</title>
        <authorList>
            <person name="Tomb J.-F."/>
            <person name="White O."/>
            <person name="Kerlavage A.R."/>
            <person name="Clayton R.A."/>
            <person name="Sutton G.G."/>
            <person name="Fleischmann R.D."/>
            <person name="Ketchum K.A."/>
            <person name="Klenk H.-P."/>
            <person name="Gill S.R."/>
            <person name="Dougherty B.A."/>
            <person name="Nelson K.E."/>
            <person name="Quackenbush J."/>
            <person name="Zhou L."/>
            <person name="Kirkness E.F."/>
            <person name="Peterson S.N."/>
            <person name="Loftus B.J."/>
            <person name="Richardson D.L."/>
            <person name="Dodson R.J."/>
            <person name="Khalak H.G."/>
            <person name="Glodek A."/>
            <person name="McKenney K."/>
            <person name="FitzGerald L.M."/>
            <person name="Lee N."/>
            <person name="Adams M.D."/>
            <person name="Hickey E.K."/>
            <person name="Berg D.E."/>
            <person name="Gocayne J.D."/>
            <person name="Utterback T.R."/>
            <person name="Peterson J.D."/>
            <person name="Kelley J.M."/>
            <person name="Cotton M.D."/>
            <person name="Weidman J.F."/>
            <person name="Fujii C."/>
            <person name="Bowman C."/>
            <person name="Watthey L."/>
            <person name="Wallin E."/>
            <person name="Hayes W.S."/>
            <person name="Borodovsky M."/>
            <person name="Karp P.D."/>
            <person name="Smith H.O."/>
            <person name="Fraser C.M."/>
            <person name="Venter J.C."/>
        </authorList>
    </citation>
    <scope>NUCLEOTIDE SEQUENCE [LARGE SCALE GENOMIC DNA]</scope>
    <source>
        <strain>ATCC 700392 / 26695</strain>
    </source>
</reference>
<proteinExistence type="predicted"/>
<gene>
    <name type="ordered locus">HP_0245</name>
</gene>
<feature type="chain" id="PRO_0000128677" description="Uncharacterized protein HP_0245">
    <location>
        <begin position="1"/>
        <end position="105"/>
    </location>
</feature>
<protein>
    <recommendedName>
        <fullName>Uncharacterized protein HP_0245</fullName>
    </recommendedName>
</protein>
<sequence>MINNNKAMLEQYNVSKLASEEKLKALAQNKNDKLLKEQTDSFEALLLKFMLDSAMKMDNPLYPKAPGDEIYASMYKDTLSKELSGNFGYSEMLFNFLKEQEKQKP</sequence>
<name>Y245_HELPY</name>
<accession>P64657</accession>
<accession>O25027</accession>
<keyword id="KW-1185">Reference proteome</keyword>
<evidence type="ECO:0000305" key="1"/>